<feature type="chain" id="PRO_0000399246" description="Protein LURP-one-related 14">
    <location>
        <begin position="1"/>
        <end position="204"/>
    </location>
</feature>
<sequence length="204" mass="23167">MPKNKKTEWQVGDPAISVVSDQFCNPYPMDLLVKRKVQNFSKDYYEVFDPSGNLLLQIDGQAWGFNRKRVMRDPAGFTILSMRQKGLALKNKWEVHGGESKEREDLLFTVQQSQAVSLKTSVDVFLPENNNVKKTNTCDFHASGGYSNISFKVFKADALIAGVGFTWGSFCKGKYNFKVRVNPEVDYAFIIALLVMVDDNENWC</sequence>
<proteinExistence type="evidence at transcript level"/>
<name>LOR14_ARATH</name>
<dbReference type="EMBL" id="AL163763">
    <property type="protein sequence ID" value="CAB87417.1"/>
    <property type="status" value="ALT_SEQ"/>
    <property type="molecule type" value="Genomic_DNA"/>
</dbReference>
<dbReference type="EMBL" id="CP002686">
    <property type="protein sequence ID" value="AEE79490.1"/>
    <property type="molecule type" value="Genomic_DNA"/>
</dbReference>
<dbReference type="EMBL" id="AK229670">
    <property type="status" value="NOT_ANNOTATED_CDS"/>
    <property type="molecule type" value="mRNA"/>
</dbReference>
<dbReference type="PIR" id="T47735">
    <property type="entry name" value="T47735"/>
</dbReference>
<dbReference type="RefSeq" id="NP_191177.2">
    <property type="nucleotide sequence ID" value="NM_115476.3"/>
</dbReference>
<dbReference type="SMR" id="Q9LYM3"/>
<dbReference type="STRING" id="3702.Q9LYM3"/>
<dbReference type="PaxDb" id="3702-AT3G56180.1"/>
<dbReference type="ProteomicsDB" id="238479"/>
<dbReference type="EnsemblPlants" id="AT3G56180.1">
    <property type="protein sequence ID" value="AT3G56180.1"/>
    <property type="gene ID" value="AT3G56180"/>
</dbReference>
<dbReference type="GeneID" id="824784"/>
<dbReference type="Gramene" id="AT3G56180.1">
    <property type="protein sequence ID" value="AT3G56180.1"/>
    <property type="gene ID" value="AT3G56180"/>
</dbReference>
<dbReference type="KEGG" id="ath:AT3G56180"/>
<dbReference type="Araport" id="AT3G56180"/>
<dbReference type="TAIR" id="AT3G56180"/>
<dbReference type="eggNOG" id="ENOG502RZMQ">
    <property type="taxonomic scope" value="Eukaryota"/>
</dbReference>
<dbReference type="HOGENOM" id="CLU_063146_5_1_1"/>
<dbReference type="InParanoid" id="Q9LYM3"/>
<dbReference type="OrthoDB" id="97518at2759"/>
<dbReference type="PhylomeDB" id="Q9LYM3"/>
<dbReference type="PRO" id="PR:Q9LYM3"/>
<dbReference type="Proteomes" id="UP000006548">
    <property type="component" value="Chromosome 3"/>
</dbReference>
<dbReference type="ExpressionAtlas" id="Q9LYM3">
    <property type="expression patterns" value="baseline and differential"/>
</dbReference>
<dbReference type="Gene3D" id="2.40.160.200">
    <property type="entry name" value="LURP1-related"/>
    <property type="match status" value="1"/>
</dbReference>
<dbReference type="InterPro" id="IPR007612">
    <property type="entry name" value="LOR"/>
</dbReference>
<dbReference type="InterPro" id="IPR038595">
    <property type="entry name" value="LOR_sf"/>
</dbReference>
<dbReference type="InterPro" id="IPR025659">
    <property type="entry name" value="Tubby-like_C"/>
</dbReference>
<dbReference type="PANTHER" id="PTHR31087">
    <property type="match status" value="1"/>
</dbReference>
<dbReference type="PANTHER" id="PTHR31087:SF17">
    <property type="entry name" value="PROTEIN LURP-ONE-RELATED 14-RELATED"/>
    <property type="match status" value="1"/>
</dbReference>
<dbReference type="Pfam" id="PF04525">
    <property type="entry name" value="LOR"/>
    <property type="match status" value="1"/>
</dbReference>
<dbReference type="SUPFAM" id="SSF54518">
    <property type="entry name" value="Tubby C-terminal domain-like"/>
    <property type="match status" value="1"/>
</dbReference>
<evidence type="ECO:0000250" key="1"/>
<evidence type="ECO:0000305" key="2"/>
<protein>
    <recommendedName>
        <fullName>Protein LURP-one-related 14</fullName>
    </recommendedName>
</protein>
<reference key="1">
    <citation type="journal article" date="2000" name="Nature">
        <title>Sequence and analysis of chromosome 3 of the plant Arabidopsis thaliana.</title>
        <authorList>
            <person name="Salanoubat M."/>
            <person name="Lemcke K."/>
            <person name="Rieger M."/>
            <person name="Ansorge W."/>
            <person name="Unseld M."/>
            <person name="Fartmann B."/>
            <person name="Valle G."/>
            <person name="Bloecker H."/>
            <person name="Perez-Alonso M."/>
            <person name="Obermaier B."/>
            <person name="Delseny M."/>
            <person name="Boutry M."/>
            <person name="Grivell L.A."/>
            <person name="Mache R."/>
            <person name="Puigdomenech P."/>
            <person name="De Simone V."/>
            <person name="Choisne N."/>
            <person name="Artiguenave F."/>
            <person name="Robert C."/>
            <person name="Brottier P."/>
            <person name="Wincker P."/>
            <person name="Cattolico L."/>
            <person name="Weissenbach J."/>
            <person name="Saurin W."/>
            <person name="Quetier F."/>
            <person name="Schaefer M."/>
            <person name="Mueller-Auer S."/>
            <person name="Gabel C."/>
            <person name="Fuchs M."/>
            <person name="Benes V."/>
            <person name="Wurmbach E."/>
            <person name="Drzonek H."/>
            <person name="Erfle H."/>
            <person name="Jordan N."/>
            <person name="Bangert S."/>
            <person name="Wiedelmann R."/>
            <person name="Kranz H."/>
            <person name="Voss H."/>
            <person name="Holland R."/>
            <person name="Brandt P."/>
            <person name="Nyakatura G."/>
            <person name="Vezzi A."/>
            <person name="D'Angelo M."/>
            <person name="Pallavicini A."/>
            <person name="Toppo S."/>
            <person name="Simionati B."/>
            <person name="Conrad A."/>
            <person name="Hornischer K."/>
            <person name="Kauer G."/>
            <person name="Loehnert T.-H."/>
            <person name="Nordsiek G."/>
            <person name="Reichelt J."/>
            <person name="Scharfe M."/>
            <person name="Schoen O."/>
            <person name="Bargues M."/>
            <person name="Terol J."/>
            <person name="Climent J."/>
            <person name="Navarro P."/>
            <person name="Collado C."/>
            <person name="Perez-Perez A."/>
            <person name="Ottenwaelder B."/>
            <person name="Duchemin D."/>
            <person name="Cooke R."/>
            <person name="Laudie M."/>
            <person name="Berger-Llauro C."/>
            <person name="Purnelle B."/>
            <person name="Masuy D."/>
            <person name="de Haan M."/>
            <person name="Maarse A.C."/>
            <person name="Alcaraz J.-P."/>
            <person name="Cottet A."/>
            <person name="Casacuberta E."/>
            <person name="Monfort A."/>
            <person name="Argiriou A."/>
            <person name="Flores M."/>
            <person name="Liguori R."/>
            <person name="Vitale D."/>
            <person name="Mannhaupt G."/>
            <person name="Haase D."/>
            <person name="Schoof H."/>
            <person name="Rudd S."/>
            <person name="Zaccaria P."/>
            <person name="Mewes H.-W."/>
            <person name="Mayer K.F.X."/>
            <person name="Kaul S."/>
            <person name="Town C.D."/>
            <person name="Koo H.L."/>
            <person name="Tallon L.J."/>
            <person name="Jenkins J."/>
            <person name="Rooney T."/>
            <person name="Rizzo M."/>
            <person name="Walts A."/>
            <person name="Utterback T."/>
            <person name="Fujii C.Y."/>
            <person name="Shea T.P."/>
            <person name="Creasy T.H."/>
            <person name="Haas B."/>
            <person name="Maiti R."/>
            <person name="Wu D."/>
            <person name="Peterson J."/>
            <person name="Van Aken S."/>
            <person name="Pai G."/>
            <person name="Militscher J."/>
            <person name="Sellers P."/>
            <person name="Gill J.E."/>
            <person name="Feldblyum T.V."/>
            <person name="Preuss D."/>
            <person name="Lin X."/>
            <person name="Nierman W.C."/>
            <person name="Salzberg S.L."/>
            <person name="White O."/>
            <person name="Venter J.C."/>
            <person name="Fraser C.M."/>
            <person name="Kaneko T."/>
            <person name="Nakamura Y."/>
            <person name="Sato S."/>
            <person name="Kato T."/>
            <person name="Asamizu E."/>
            <person name="Sasamoto S."/>
            <person name="Kimura T."/>
            <person name="Idesawa K."/>
            <person name="Kawashima K."/>
            <person name="Kishida Y."/>
            <person name="Kiyokawa C."/>
            <person name="Kohara M."/>
            <person name="Matsumoto M."/>
            <person name="Matsuno A."/>
            <person name="Muraki A."/>
            <person name="Nakayama S."/>
            <person name="Nakazaki N."/>
            <person name="Shinpo S."/>
            <person name="Takeuchi C."/>
            <person name="Wada T."/>
            <person name="Watanabe A."/>
            <person name="Yamada M."/>
            <person name="Yasuda M."/>
            <person name="Tabata S."/>
        </authorList>
    </citation>
    <scope>NUCLEOTIDE SEQUENCE [LARGE SCALE GENOMIC DNA]</scope>
    <source>
        <strain>cv. Columbia</strain>
    </source>
</reference>
<reference key="2">
    <citation type="journal article" date="2017" name="Plant J.">
        <title>Araport11: a complete reannotation of the Arabidopsis thaliana reference genome.</title>
        <authorList>
            <person name="Cheng C.Y."/>
            <person name="Krishnakumar V."/>
            <person name="Chan A.P."/>
            <person name="Thibaud-Nissen F."/>
            <person name="Schobel S."/>
            <person name="Town C.D."/>
        </authorList>
    </citation>
    <scope>GENOME REANNOTATION</scope>
    <source>
        <strain>cv. Columbia</strain>
    </source>
</reference>
<reference key="3">
    <citation type="submission" date="2006-07" db="EMBL/GenBank/DDBJ databases">
        <title>Large-scale analysis of RIKEN Arabidopsis full-length (RAFL) cDNAs.</title>
        <authorList>
            <person name="Totoki Y."/>
            <person name="Seki M."/>
            <person name="Ishida J."/>
            <person name="Nakajima M."/>
            <person name="Enju A."/>
            <person name="Kamiya A."/>
            <person name="Narusaka M."/>
            <person name="Shin-i T."/>
            <person name="Nakagawa M."/>
            <person name="Sakamoto N."/>
            <person name="Oishi K."/>
            <person name="Kohara Y."/>
            <person name="Kobayashi M."/>
            <person name="Toyoda A."/>
            <person name="Sakaki Y."/>
            <person name="Sakurai T."/>
            <person name="Iida K."/>
            <person name="Akiyama K."/>
            <person name="Satou M."/>
            <person name="Toyoda T."/>
            <person name="Konagaya A."/>
            <person name="Carninci P."/>
            <person name="Kawai J."/>
            <person name="Hayashizaki Y."/>
            <person name="Shinozaki K."/>
        </authorList>
    </citation>
    <scope>NUCLEOTIDE SEQUENCE [LARGE SCALE MRNA]</scope>
    <source>
        <strain>cv. Columbia</strain>
    </source>
</reference>
<keyword id="KW-1185">Reference proteome</keyword>
<comment type="function">
    <text evidence="1">Might be related to the phospholipid scramblase and tubby-like superfamily of membrane tethered transcription factors.</text>
</comment>
<comment type="similarity">
    <text evidence="2">Belongs to the LOR family.</text>
</comment>
<comment type="sequence caution" evidence="2">
    <conflict type="frameshift">
        <sequence resource="EMBL" id="AK229670"/>
    </conflict>
</comment>
<comment type="sequence caution" evidence="2">
    <conflict type="erroneous gene model prediction">
        <sequence resource="EMBL-CDS" id="CAB87417"/>
    </conflict>
</comment>
<accession>Q9LYM3</accession>
<organism>
    <name type="scientific">Arabidopsis thaliana</name>
    <name type="common">Mouse-ear cress</name>
    <dbReference type="NCBI Taxonomy" id="3702"/>
    <lineage>
        <taxon>Eukaryota</taxon>
        <taxon>Viridiplantae</taxon>
        <taxon>Streptophyta</taxon>
        <taxon>Embryophyta</taxon>
        <taxon>Tracheophyta</taxon>
        <taxon>Spermatophyta</taxon>
        <taxon>Magnoliopsida</taxon>
        <taxon>eudicotyledons</taxon>
        <taxon>Gunneridae</taxon>
        <taxon>Pentapetalae</taxon>
        <taxon>rosids</taxon>
        <taxon>malvids</taxon>
        <taxon>Brassicales</taxon>
        <taxon>Brassicaceae</taxon>
        <taxon>Camelineae</taxon>
        <taxon>Arabidopsis</taxon>
    </lineage>
</organism>
<gene>
    <name type="ordered locus">At3g56180</name>
    <name type="ORF">F18O21.140</name>
</gene>